<keyword id="KW-1003">Cell membrane</keyword>
<keyword id="KW-0449">Lipoprotein</keyword>
<keyword id="KW-0472">Membrane</keyword>
<keyword id="KW-0564">Palmitate</keyword>
<keyword id="KW-0732">Signal</keyword>
<name>LP816_MYCHT</name>
<dbReference type="EMBL" id="AP012555">
    <property type="protein sequence ID" value="BAN29890.1"/>
    <property type="status" value="ALT_INIT"/>
    <property type="molecule type" value="Genomic_DNA"/>
</dbReference>
<dbReference type="SMR" id="T2GP47"/>
<dbReference type="HOGENOM" id="CLU_131476_0_1_11"/>
<dbReference type="GO" id="GO:0005886">
    <property type="term" value="C:plasma membrane"/>
    <property type="evidence" value="ECO:0007669"/>
    <property type="project" value="UniProtKB-SubCell"/>
</dbReference>
<dbReference type="InterPro" id="IPR008691">
    <property type="entry name" value="LpqH"/>
</dbReference>
<dbReference type="Pfam" id="PF05481">
    <property type="entry name" value="Myco_19_kDa"/>
    <property type="match status" value="1"/>
</dbReference>
<dbReference type="PROSITE" id="PS51257">
    <property type="entry name" value="PROKAR_LIPOPROTEIN"/>
    <property type="match status" value="1"/>
</dbReference>
<proteinExistence type="inferred from homology"/>
<sequence length="144" mass="15231">MRWPMQNRTTAVIAVALATTALVACSSRSASAVSSTATVTVDGKDSTMHIVKCTQLEWYRMINIGSDFAGAKIVIDQRAHPVTAESVRIQNLNGFTGMYSRGGDGNADLRLSGDKFTITGTAHGYKADKPGDAATATFKIVTAC</sequence>
<accession>T2GP47</accession>
<protein>
    <recommendedName>
        <fullName evidence="2">Putative lipoprotein MAH_0816</fullName>
    </recommendedName>
</protein>
<reference key="1">
    <citation type="journal article" date="2013" name="PLoS ONE">
        <title>Comparative genome analysis of Mycobacterium avium revealed genetic diversity in strains that cause pulmonary and disseminated disease.</title>
        <authorList>
            <person name="Uchiya K."/>
            <person name="Takahashi H."/>
            <person name="Yagi T."/>
            <person name="Moriyama M."/>
            <person name="Ichikawa K."/>
            <person name="Inagaki T."/>
            <person name="Nakagawa T."/>
            <person name="Nikai T."/>
            <person name="Ogawa K."/>
        </authorList>
    </citation>
    <scope>NUCLEOTIDE SEQUENCE [LARGE SCALE GENOMIC DNA]</scope>
    <source>
        <strain>TH135</strain>
    </source>
</reference>
<evidence type="ECO:0000255" key="1">
    <source>
        <dbReference type="PROSITE-ProRule" id="PRU00303"/>
    </source>
</evidence>
<evidence type="ECO:0000305" key="2"/>
<organism>
    <name type="scientific">Mycobacterium avium subsp. hominissuis (strain TH135)</name>
    <dbReference type="NCBI Taxonomy" id="1229671"/>
    <lineage>
        <taxon>Bacteria</taxon>
        <taxon>Bacillati</taxon>
        <taxon>Actinomycetota</taxon>
        <taxon>Actinomycetes</taxon>
        <taxon>Mycobacteriales</taxon>
        <taxon>Mycobacteriaceae</taxon>
        <taxon>Mycobacterium</taxon>
        <taxon>Mycobacterium avium complex (MAC)</taxon>
    </lineage>
</organism>
<gene>
    <name type="ORF">MAH_0816</name>
</gene>
<comment type="subcellular location">
    <subcellularLocation>
        <location evidence="1">Cell membrane</location>
        <topology evidence="1">Lipid-anchor</topology>
    </subcellularLocation>
</comment>
<comment type="similarity">
    <text evidence="2">Belongs to the mycobacterial 19 kDa antigen family.</text>
</comment>
<comment type="sequence caution" evidence="2">
    <conflict type="erroneous initiation">
        <sequence resource="EMBL-CDS" id="BAN29890"/>
    </conflict>
    <text>Truncated N-terminus.</text>
</comment>
<feature type="signal peptide" evidence="1">
    <location>
        <begin position="1"/>
        <end position="24"/>
    </location>
</feature>
<feature type="chain" id="PRO_0000434269" description="Putative lipoprotein MAH_0816" evidence="1">
    <location>
        <begin position="25"/>
        <end position="144"/>
    </location>
</feature>
<feature type="lipid moiety-binding region" description="N-palmitoyl cysteine" evidence="1">
    <location>
        <position position="25"/>
    </location>
</feature>
<feature type="lipid moiety-binding region" description="S-diacylglycerol cysteine" evidence="1">
    <location>
        <position position="25"/>
    </location>
</feature>